<organism>
    <name type="scientific">Staphylococcus aureus</name>
    <dbReference type="NCBI Taxonomy" id="1280"/>
    <lineage>
        <taxon>Bacteria</taxon>
        <taxon>Bacillati</taxon>
        <taxon>Bacillota</taxon>
        <taxon>Bacilli</taxon>
        <taxon>Bacillales</taxon>
        <taxon>Staphylococcaceae</taxon>
        <taxon>Staphylococcus</taxon>
    </lineage>
</organism>
<gene>
    <name type="primary">entC3</name>
</gene>
<comment type="function">
    <text evidence="1 2 5">Staphylococcal enterotoxin that activates the host immune system by binding as unprocessed molecules to major histocompatibility (MHC) complex class II and T-cell receptor (TCR) molecules. In turn, this ternary complex activates a large number of T-lymphocytes initiating a systemic release of pro-inflammatory cytokines (PubMed:10229190, PubMed:28849041). Also causes the intoxication staphylococcal food poisoning syndrome (By similarity).</text>
</comment>
<comment type="subunit">
    <text evidence="2 4">Interacts with MHC class II molecules composed of alpha/HLA-DRA and beta/HLA-DRB1 chains (PubMed:10229190). Interacts with host T-cell receptor/TCR beta variable chain TRBV8-2 (PubMed:10229190, PubMed:20836565).</text>
</comment>
<comment type="subcellular location">
    <subcellularLocation>
        <location>Secreted</location>
    </subcellularLocation>
</comment>
<comment type="similarity">
    <text evidence="8">Belongs to the staphylococcal/streptococcal toxin family.</text>
</comment>
<proteinExistence type="evidence at protein level"/>
<sequence length="266" mass="30671">MYKRLFISRVILIFALILVISTPNVLAESQPDPMPDDLHKSSEFTGTMGNMKYLYDDHYVSATKVKSVDKFLAHDLIYNISDKKLKNYDKVKTELLNEDLAKKYKDEVVDVYGSNYYVNCYFSSKDNVGKVTGGKTCMYGGITKHEGNHFDNGNLQNVLVRVYENKRNTISFEVQTDKKSVTAQELDIKARNFLINKKNLYEFNSSPYETGYIKFIENNGNTFWYDMMPAPGDKFDQSKYLMMYNDNKTVDSKSVKIEVHLTTKNG</sequence>
<reference key="1">
    <citation type="journal article" date="1990" name="Mol. Gen. Genet.">
        <title>Nucleotide sequence of the staphylococcal enterotoxin C3 gene: sequence comparison of all three type C staphylococcal enterotoxins.</title>
        <authorList>
            <person name="Hovde C.J."/>
            <person name="Hackett S.P."/>
            <person name="Bohach G.A."/>
        </authorList>
    </citation>
    <scope>NUCLEOTIDE SEQUENCE [GENOMIC DNA]</scope>
</reference>
<reference key="2">
    <citation type="journal article" date="1999" name="Immunity">
        <title>Role of the T cell receptor alpha chain in stabilizing TCR-superantigen-MHC class II complexes.</title>
        <authorList>
            <person name="Andersen P.S."/>
            <person name="Lavoie P.M."/>
            <person name="Sekaly R.P."/>
            <person name="Churchill H."/>
            <person name="Kranz D.M."/>
            <person name="Schlievert P.M."/>
            <person name="Karjalainen K."/>
            <person name="Mariuzza R.A."/>
        </authorList>
    </citation>
    <scope>FUNCTION</scope>
    <scope>INTERACTION WITH HOST MHC CLASS II HLA-DRA; HLA-DRB1 AND T-CELL RECEPTOR/TCR BETA VARIABLE CHAIN</scope>
</reference>
<reference key="3">
    <citation type="journal article" date="2017" name="Mol. Med. Report.">
        <title>In vitro effects of Staphylococcus aureus enterotoxin C3 on T cell activation, proliferation and cytokine production.</title>
        <authorList>
            <person name="Xie Y."/>
            <person name="Wang M."/>
            <person name="Dong Z."/>
            <person name="Song H."/>
            <person name="Li L."/>
            <person name="Yang M."/>
            <person name="Li P."/>
            <person name="Tian J."/>
            <person name="Zhang K."/>
            <person name="Xia X."/>
            <person name="Zhang T."/>
            <person name="Tang A."/>
        </authorList>
    </citation>
    <scope>FUNCTION</scope>
</reference>
<reference key="4">
    <citation type="journal article" date="1996" name="Nature">
        <title>Crystal structure of a T-cell receptor beta-chain complexed with a superantigen.</title>
        <authorList>
            <person name="Fields B.A."/>
            <person name="Malchiodi E.L."/>
            <person name="Li H."/>
            <person name="Ysern X."/>
            <person name="Stauffacher C.V."/>
            <person name="Schlievert P.M."/>
            <person name="Karjalainen K."/>
            <person name="Mariuzza R.A."/>
        </authorList>
    </citation>
    <scope>X-RAY CRYSTALLOGRAPHY (3.5 ANGSTROMS) OF COMPLEX WITH HOST TCR</scope>
    <scope>DISULFIDE BOND</scope>
</reference>
<reference evidence="10 11 12" key="5">
    <citation type="journal article" date="2003" name="Structure">
        <title>Structural, energetic, and functional analysis of a protein-protein interface at distinct stages of affinity maturation.</title>
        <authorList>
            <person name="Sundberg E.J."/>
            <person name="Andersen P.S."/>
            <person name="Schlievert P.M."/>
            <person name="Karjalainen K."/>
            <person name="Mariuzza R.A."/>
        </authorList>
    </citation>
    <scope>X-RAY CRYSTALLOGRAPHY (2.30 ANGSTROMS) OF 28-266</scope>
    <scope>INTERACTION WITH HOST MHC CLASS II SUBUNITS HLA-DRA AND HLA-DRB1</scope>
    <scope>DISULFIDE BOND</scope>
</reference>
<reference evidence="14 15 16 17 18" key="6">
    <citation type="submission" date="2008-01" db="PDB data bank">
        <title>Manipulating the coupled folding and binding process drives affinity maturation in a protein-protein complex.</title>
        <authorList>
            <person name="Cho S."/>
            <person name="Swaminathan C.P."/>
            <person name="Kerzic M.C."/>
            <person name="Guan R."/>
            <person name="Yang J."/>
            <person name="Kieke M.C."/>
            <person name="Andersen P.S."/>
            <person name="Krantz D.M."/>
            <person name="Mariuzza R.A."/>
            <person name="Eric S.J."/>
        </authorList>
    </citation>
    <scope>X-RAY CRYSTALLOGRAPHY (2.00 ANGSTROMS) OF 28-266 IN COMPLEX WITH ZINC</scope>
</reference>
<reference evidence="13" key="7">
    <citation type="journal article" date="2010" name="Biochemistry">
        <title>Assessing energetic contributions to binding from a disordered region in a protein-protein interaction.</title>
        <authorList>
            <person name="Cho S."/>
            <person name="Swaminathan C.P."/>
            <person name="Bonsor D.A."/>
            <person name="Kerzic M.C."/>
            <person name="Guan R."/>
            <person name="Yang J."/>
            <person name="Kieke M.C."/>
            <person name="Andersen P.S."/>
            <person name="Kranz D.M."/>
            <person name="Mariuzza R.A."/>
            <person name="Sundberg E.J."/>
        </authorList>
    </citation>
    <scope>X-RAY CRYSTALLOGRAPHY (2.00 ANGSTROMS) OF 28-266 IN COMPLEX WITH ZINC</scope>
    <scope>INTERACTION WITH HOST T-CELL RECEPTOR/TCR BETA VARIABLE/TRBV8-2</scope>
</reference>
<name>ENTC3_STAAU</name>
<evidence type="ECO:0000250" key="1">
    <source>
        <dbReference type="UniProtKB" id="P34071"/>
    </source>
</evidence>
<evidence type="ECO:0000269" key="2">
    <source>
    </source>
</evidence>
<evidence type="ECO:0000269" key="3">
    <source>
    </source>
</evidence>
<evidence type="ECO:0000269" key="4">
    <source>
    </source>
</evidence>
<evidence type="ECO:0000269" key="5">
    <source>
    </source>
</evidence>
<evidence type="ECO:0000269" key="6">
    <source>
    </source>
</evidence>
<evidence type="ECO:0000269" key="7">
    <source ref="6"/>
</evidence>
<evidence type="ECO:0000305" key="8"/>
<evidence type="ECO:0007744" key="9">
    <source>
        <dbReference type="PDB" id="1JCK"/>
    </source>
</evidence>
<evidence type="ECO:0007744" key="10">
    <source>
        <dbReference type="PDB" id="1JWM"/>
    </source>
</evidence>
<evidence type="ECO:0007744" key="11">
    <source>
        <dbReference type="PDB" id="1JWS"/>
    </source>
</evidence>
<evidence type="ECO:0007744" key="12">
    <source>
        <dbReference type="PDB" id="1JWU"/>
    </source>
</evidence>
<evidence type="ECO:0007744" key="13">
    <source>
        <dbReference type="PDB" id="3BVG"/>
    </source>
</evidence>
<evidence type="ECO:0007744" key="14">
    <source>
        <dbReference type="PDB" id="3BVM"/>
    </source>
</evidence>
<evidence type="ECO:0007744" key="15">
    <source>
        <dbReference type="PDB" id="3BVZ"/>
    </source>
</evidence>
<evidence type="ECO:0007744" key="16">
    <source>
        <dbReference type="PDB" id="3BYT"/>
    </source>
</evidence>
<evidence type="ECO:0007744" key="17">
    <source>
        <dbReference type="PDB" id="3BYY"/>
    </source>
</evidence>
<evidence type="ECO:0007744" key="18">
    <source>
        <dbReference type="PDB" id="3BZD"/>
    </source>
</evidence>
<evidence type="ECO:0007829" key="19">
    <source>
        <dbReference type="PDB" id="1JWU"/>
    </source>
</evidence>
<evidence type="ECO:0007829" key="20">
    <source>
        <dbReference type="PDB" id="1KLU"/>
    </source>
</evidence>
<evidence type="ECO:0007829" key="21">
    <source>
        <dbReference type="PDB" id="2AQ2"/>
    </source>
</evidence>
<evidence type="ECO:0007829" key="22">
    <source>
        <dbReference type="PDB" id="3BZD"/>
    </source>
</evidence>
<feature type="signal peptide">
    <location>
        <begin position="1"/>
        <end position="27"/>
    </location>
</feature>
<feature type="chain" id="PRO_0000035611" description="Enterotoxin type C-3">
    <location>
        <begin position="28"/>
        <end position="266"/>
    </location>
</feature>
<feature type="binding site" evidence="4 7 13 14 15">
    <location>
        <position position="36"/>
    </location>
    <ligand>
        <name>Zn(2+)</name>
        <dbReference type="ChEBI" id="CHEBI:29105"/>
    </ligand>
</feature>
<feature type="binding site" evidence="4 7 13 14 15">
    <location>
        <position position="110"/>
    </location>
    <ligand>
        <name>Zn(2+)</name>
        <dbReference type="ChEBI" id="CHEBI:29105"/>
    </ligand>
</feature>
<feature type="binding site" evidence="4 7 13 14 15">
    <location>
        <position position="145"/>
    </location>
    <ligand>
        <name>Zn(2+)</name>
        <dbReference type="ChEBI" id="CHEBI:29105"/>
    </ligand>
</feature>
<feature type="binding site" evidence="4 7 13 14 15">
    <location>
        <position position="149"/>
    </location>
    <ligand>
        <name>Zn(2+)</name>
        <dbReference type="ChEBI" id="CHEBI:29105"/>
    </ligand>
</feature>
<feature type="disulfide bond" evidence="3 4 6 7 9 10 11 12 13 14 15 16 17 18">
    <location>
        <begin position="120"/>
        <end position="137"/>
    </location>
</feature>
<feature type="helix" evidence="21">
    <location>
        <begin position="35"/>
        <end position="37"/>
    </location>
</feature>
<feature type="helix" evidence="21">
    <location>
        <begin position="41"/>
        <end position="43"/>
    </location>
</feature>
<feature type="helix" evidence="21">
    <location>
        <begin position="49"/>
        <end position="52"/>
    </location>
</feature>
<feature type="turn" evidence="21">
    <location>
        <begin position="53"/>
        <end position="55"/>
    </location>
</feature>
<feature type="strand" evidence="21">
    <location>
        <begin position="60"/>
        <end position="65"/>
    </location>
</feature>
<feature type="strand" evidence="22">
    <location>
        <begin position="69"/>
        <end position="72"/>
    </location>
</feature>
<feature type="strand" evidence="21">
    <location>
        <begin position="75"/>
        <end position="78"/>
    </location>
</feature>
<feature type="strand" evidence="21">
    <location>
        <begin position="83"/>
        <end position="94"/>
    </location>
</feature>
<feature type="helix" evidence="21">
    <location>
        <begin position="98"/>
        <end position="104"/>
    </location>
</feature>
<feature type="strand" evidence="21">
    <location>
        <begin position="109"/>
        <end position="113"/>
    </location>
</feature>
<feature type="strand" evidence="21">
    <location>
        <begin position="122"/>
        <end position="124"/>
    </location>
</feature>
<feature type="strand" evidence="21">
    <location>
        <begin position="134"/>
        <end position="139"/>
    </location>
</feature>
<feature type="strand" evidence="21">
    <location>
        <begin position="142"/>
        <end position="144"/>
    </location>
</feature>
<feature type="turn" evidence="22">
    <location>
        <begin position="146"/>
        <end position="148"/>
    </location>
</feature>
<feature type="turn" evidence="20">
    <location>
        <begin position="151"/>
        <end position="153"/>
    </location>
</feature>
<feature type="strand" evidence="21">
    <location>
        <begin position="156"/>
        <end position="164"/>
    </location>
</feature>
<feature type="strand" evidence="21">
    <location>
        <begin position="167"/>
        <end position="182"/>
    </location>
</feature>
<feature type="helix" evidence="21">
    <location>
        <begin position="183"/>
        <end position="198"/>
    </location>
</feature>
<feature type="strand" evidence="19">
    <location>
        <begin position="200"/>
        <end position="202"/>
    </location>
</feature>
<feature type="strand" evidence="21">
    <location>
        <begin position="207"/>
        <end position="216"/>
    </location>
</feature>
<feature type="turn" evidence="22">
    <location>
        <begin position="218"/>
        <end position="220"/>
    </location>
</feature>
<feature type="strand" evidence="21">
    <location>
        <begin position="222"/>
        <end position="226"/>
    </location>
</feature>
<feature type="strand" evidence="21">
    <location>
        <begin position="231"/>
        <end position="233"/>
    </location>
</feature>
<feature type="helix" evidence="21">
    <location>
        <begin position="237"/>
        <end position="241"/>
    </location>
</feature>
<feature type="helix" evidence="21">
    <location>
        <begin position="242"/>
        <end position="246"/>
    </location>
</feature>
<feature type="strand" evidence="21">
    <location>
        <begin position="249"/>
        <end position="251"/>
    </location>
</feature>
<feature type="turn" evidence="21">
    <location>
        <begin position="252"/>
        <end position="254"/>
    </location>
</feature>
<feature type="strand" evidence="21">
    <location>
        <begin position="256"/>
        <end position="263"/>
    </location>
</feature>
<protein>
    <recommendedName>
        <fullName>Enterotoxin type C-3</fullName>
    </recommendedName>
    <alternativeName>
        <fullName>SEC3</fullName>
    </alternativeName>
</protein>
<accession>P0A0L5</accession>
<accession>P23313</accession>
<dbReference type="EMBL" id="X51661">
    <property type="protein sequence ID" value="CAA35972.1"/>
    <property type="molecule type" value="Genomic_DNA"/>
</dbReference>
<dbReference type="PIR" id="S11885">
    <property type="entry name" value="S11885"/>
</dbReference>
<dbReference type="PDB" id="1JCK">
    <property type="method" value="X-ray"/>
    <property type="resolution" value="3.50 A"/>
    <property type="chains" value="B/D=28-266"/>
</dbReference>
<dbReference type="PDB" id="1JWM">
    <property type="method" value="X-ray"/>
    <property type="resolution" value="2.70 A"/>
    <property type="chains" value="D=28-266"/>
</dbReference>
<dbReference type="PDB" id="1JWS">
    <property type="method" value="X-ray"/>
    <property type="resolution" value="2.60 A"/>
    <property type="chains" value="D=28-266"/>
</dbReference>
<dbReference type="PDB" id="1JWU">
    <property type="method" value="X-ray"/>
    <property type="resolution" value="2.30 A"/>
    <property type="chains" value="D=28-266"/>
</dbReference>
<dbReference type="PDB" id="1KLG">
    <property type="method" value="X-ray"/>
    <property type="resolution" value="2.40 A"/>
    <property type="chains" value="D=28-266"/>
</dbReference>
<dbReference type="PDB" id="1KLU">
    <property type="method" value="X-ray"/>
    <property type="resolution" value="1.93 A"/>
    <property type="chains" value="D=28-266"/>
</dbReference>
<dbReference type="PDB" id="1SJE">
    <property type="method" value="X-ray"/>
    <property type="resolution" value="2.45 A"/>
    <property type="chains" value="D=28-266"/>
</dbReference>
<dbReference type="PDB" id="1SJH">
    <property type="method" value="X-ray"/>
    <property type="resolution" value="2.25 A"/>
    <property type="chains" value="D=28-266"/>
</dbReference>
<dbReference type="PDB" id="1T5X">
    <property type="method" value="X-ray"/>
    <property type="resolution" value="2.50 A"/>
    <property type="chains" value="D=28-266"/>
</dbReference>
<dbReference type="PDB" id="2AQ1">
    <property type="method" value="X-ray"/>
    <property type="resolution" value="2.10 A"/>
    <property type="chains" value="B/D/F/H=28-266"/>
</dbReference>
<dbReference type="PDB" id="2AQ2">
    <property type="method" value="X-ray"/>
    <property type="resolution" value="1.80 A"/>
    <property type="chains" value="B=28-266"/>
</dbReference>
<dbReference type="PDB" id="2AQ3">
    <property type="method" value="X-ray"/>
    <property type="resolution" value="2.30 A"/>
    <property type="chains" value="B/D/F/H=28-266"/>
</dbReference>
<dbReference type="PDB" id="2IPK">
    <property type="method" value="X-ray"/>
    <property type="resolution" value="2.30 A"/>
    <property type="chains" value="D=28-266"/>
</dbReference>
<dbReference type="PDB" id="3BVG">
    <property type="method" value="X-ray"/>
    <property type="resolution" value="2.00 A"/>
    <property type="chains" value="A=28-266"/>
</dbReference>
<dbReference type="PDB" id="3BVM">
    <property type="method" value="X-ray"/>
    <property type="resolution" value="2.00 A"/>
    <property type="chains" value="A=28-266"/>
</dbReference>
<dbReference type="PDB" id="3BVZ">
    <property type="method" value="X-ray"/>
    <property type="resolution" value="2.30 A"/>
    <property type="chains" value="A=28-266"/>
</dbReference>
<dbReference type="PDB" id="3BYT">
    <property type="method" value="X-ray"/>
    <property type="resolution" value="2.30 A"/>
    <property type="chains" value="B/D/F/H=28-266"/>
</dbReference>
<dbReference type="PDB" id="3BYY">
    <property type="method" value="X-ray"/>
    <property type="resolution" value="2.20 A"/>
    <property type="chains" value="B=28-266"/>
</dbReference>
<dbReference type="PDB" id="3BZD">
    <property type="method" value="X-ray"/>
    <property type="resolution" value="2.30 A"/>
    <property type="chains" value="B=28-266"/>
</dbReference>
<dbReference type="PDBsum" id="1JCK"/>
<dbReference type="PDBsum" id="1JWM"/>
<dbReference type="PDBsum" id="1JWS"/>
<dbReference type="PDBsum" id="1JWU"/>
<dbReference type="PDBsum" id="1KLG"/>
<dbReference type="PDBsum" id="1KLU"/>
<dbReference type="PDBsum" id="1SJE"/>
<dbReference type="PDBsum" id="1SJH"/>
<dbReference type="PDBsum" id="1T5X"/>
<dbReference type="PDBsum" id="2AQ1"/>
<dbReference type="PDBsum" id="2AQ2"/>
<dbReference type="PDBsum" id="2AQ3"/>
<dbReference type="PDBsum" id="2IPK"/>
<dbReference type="PDBsum" id="3BVG"/>
<dbReference type="PDBsum" id="3BVM"/>
<dbReference type="PDBsum" id="3BVZ"/>
<dbReference type="PDBsum" id="3BYT"/>
<dbReference type="PDBsum" id="3BYY"/>
<dbReference type="PDBsum" id="3BZD"/>
<dbReference type="SMR" id="P0A0L5"/>
<dbReference type="Allergome" id="2141">
    <property type="allergen name" value="Sta a SEC"/>
</dbReference>
<dbReference type="OMA" id="KFTGLME"/>
<dbReference type="EvolutionaryTrace" id="P0A0L5"/>
<dbReference type="PRO" id="PR:P0A0L5"/>
<dbReference type="GO" id="GO:0005576">
    <property type="term" value="C:extracellular region"/>
    <property type="evidence" value="ECO:0007669"/>
    <property type="project" value="UniProtKB-SubCell"/>
</dbReference>
<dbReference type="GO" id="GO:0046872">
    <property type="term" value="F:metal ion binding"/>
    <property type="evidence" value="ECO:0007669"/>
    <property type="project" value="UniProtKB-KW"/>
</dbReference>
<dbReference type="GO" id="GO:0090729">
    <property type="term" value="F:toxin activity"/>
    <property type="evidence" value="ECO:0007669"/>
    <property type="project" value="UniProtKB-KW"/>
</dbReference>
<dbReference type="Gene3D" id="2.40.50.110">
    <property type="match status" value="1"/>
</dbReference>
<dbReference type="Gene3D" id="3.10.20.120">
    <property type="match status" value="1"/>
</dbReference>
<dbReference type="InterPro" id="IPR008992">
    <property type="entry name" value="Enterotoxin"/>
</dbReference>
<dbReference type="InterPro" id="IPR006126">
    <property type="entry name" value="Staph/Strept_toxin_CS"/>
</dbReference>
<dbReference type="InterPro" id="IPR006173">
    <property type="entry name" value="Staph_tox_OB"/>
</dbReference>
<dbReference type="InterPro" id="IPR016091">
    <property type="entry name" value="SuperAg_toxin_C"/>
</dbReference>
<dbReference type="InterPro" id="IPR013307">
    <property type="entry name" value="Superantigen_bac"/>
</dbReference>
<dbReference type="InterPro" id="IPR006123">
    <property type="entry name" value="Toxin_b-grasp_Staph/Strep"/>
</dbReference>
<dbReference type="InterPro" id="IPR006177">
    <property type="entry name" value="Toxin_bac"/>
</dbReference>
<dbReference type="Pfam" id="PF02876">
    <property type="entry name" value="Stap_Strp_tox_C"/>
    <property type="match status" value="1"/>
</dbReference>
<dbReference type="Pfam" id="PF01123">
    <property type="entry name" value="Stap_Strp_toxin"/>
    <property type="match status" value="1"/>
</dbReference>
<dbReference type="PRINTS" id="PR00279">
    <property type="entry name" value="BACTRLTOXIN"/>
</dbReference>
<dbReference type="PRINTS" id="PR01898">
    <property type="entry name" value="SAGSUPRFAMLY"/>
</dbReference>
<dbReference type="SUPFAM" id="SSF50203">
    <property type="entry name" value="Bacterial enterotoxins"/>
    <property type="match status" value="1"/>
</dbReference>
<dbReference type="SUPFAM" id="SSF54334">
    <property type="entry name" value="Superantigen toxins, C-terminal domain"/>
    <property type="match status" value="1"/>
</dbReference>
<dbReference type="PROSITE" id="PS00277">
    <property type="entry name" value="STAPH_STREP_TOXIN_1"/>
    <property type="match status" value="1"/>
</dbReference>
<dbReference type="PROSITE" id="PS00278">
    <property type="entry name" value="STAPH_STREP_TOXIN_2"/>
    <property type="match status" value="1"/>
</dbReference>
<keyword id="KW-0002">3D-structure</keyword>
<keyword id="KW-1015">Disulfide bond</keyword>
<keyword id="KW-0260">Enterotoxin</keyword>
<keyword id="KW-0479">Metal-binding</keyword>
<keyword id="KW-0964">Secreted</keyword>
<keyword id="KW-0732">Signal</keyword>
<keyword id="KW-0766">Superantigen</keyword>
<keyword id="KW-0800">Toxin</keyword>
<keyword id="KW-0843">Virulence</keyword>
<keyword id="KW-0862">Zinc</keyword>